<organism>
    <name type="scientific">Francisella tularensis subsp. tularensis (strain FSC 198)</name>
    <dbReference type="NCBI Taxonomy" id="393115"/>
    <lineage>
        <taxon>Bacteria</taxon>
        <taxon>Pseudomonadati</taxon>
        <taxon>Pseudomonadota</taxon>
        <taxon>Gammaproteobacteria</taxon>
        <taxon>Thiotrichales</taxon>
        <taxon>Francisellaceae</taxon>
        <taxon>Francisella</taxon>
    </lineage>
</organism>
<sequence length="175" mass="18795">MNLDFIKSKIAAVPDFPKPGIMFRDITPLLADPQGLRKTAEAMAQELKNKGIQPTIVAGTESRGFIFGVALAEVLGLGFVPVRKPGKLPRATYSVKYDLEYGSDSLEIHQDAFKVTDEVLVVDDLLATGGTAKATVDLIEKTQAKVAGLIFVMELDGLGGREVLAGYNVSALIKF</sequence>
<dbReference type="EC" id="2.4.2.7" evidence="1"/>
<dbReference type="EMBL" id="AM286280">
    <property type="protein sequence ID" value="CAL08094.1"/>
    <property type="molecule type" value="Genomic_DNA"/>
</dbReference>
<dbReference type="RefSeq" id="WP_003028608.1">
    <property type="nucleotide sequence ID" value="NC_008245.1"/>
</dbReference>
<dbReference type="SMR" id="Q14JZ2"/>
<dbReference type="KEGG" id="ftf:FTF0078"/>
<dbReference type="HOGENOM" id="CLU_063339_3_0_6"/>
<dbReference type="UniPathway" id="UPA00588">
    <property type="reaction ID" value="UER00646"/>
</dbReference>
<dbReference type="GO" id="GO:0005737">
    <property type="term" value="C:cytoplasm"/>
    <property type="evidence" value="ECO:0007669"/>
    <property type="project" value="UniProtKB-SubCell"/>
</dbReference>
<dbReference type="GO" id="GO:0002055">
    <property type="term" value="F:adenine binding"/>
    <property type="evidence" value="ECO:0007669"/>
    <property type="project" value="TreeGrafter"/>
</dbReference>
<dbReference type="GO" id="GO:0003999">
    <property type="term" value="F:adenine phosphoribosyltransferase activity"/>
    <property type="evidence" value="ECO:0007669"/>
    <property type="project" value="UniProtKB-UniRule"/>
</dbReference>
<dbReference type="GO" id="GO:0016208">
    <property type="term" value="F:AMP binding"/>
    <property type="evidence" value="ECO:0007669"/>
    <property type="project" value="TreeGrafter"/>
</dbReference>
<dbReference type="GO" id="GO:0006168">
    <property type="term" value="P:adenine salvage"/>
    <property type="evidence" value="ECO:0007669"/>
    <property type="project" value="InterPro"/>
</dbReference>
<dbReference type="GO" id="GO:0044209">
    <property type="term" value="P:AMP salvage"/>
    <property type="evidence" value="ECO:0007669"/>
    <property type="project" value="UniProtKB-UniRule"/>
</dbReference>
<dbReference type="GO" id="GO:0006166">
    <property type="term" value="P:purine ribonucleoside salvage"/>
    <property type="evidence" value="ECO:0007669"/>
    <property type="project" value="UniProtKB-KW"/>
</dbReference>
<dbReference type="CDD" id="cd06223">
    <property type="entry name" value="PRTases_typeI"/>
    <property type="match status" value="1"/>
</dbReference>
<dbReference type="FunFam" id="3.40.50.2020:FF:000004">
    <property type="entry name" value="Adenine phosphoribosyltransferase"/>
    <property type="match status" value="1"/>
</dbReference>
<dbReference type="Gene3D" id="3.40.50.2020">
    <property type="match status" value="1"/>
</dbReference>
<dbReference type="HAMAP" id="MF_00004">
    <property type="entry name" value="Aden_phosphoribosyltr"/>
    <property type="match status" value="1"/>
</dbReference>
<dbReference type="InterPro" id="IPR005764">
    <property type="entry name" value="Ade_phspho_trans"/>
</dbReference>
<dbReference type="InterPro" id="IPR000836">
    <property type="entry name" value="PRibTrfase_dom"/>
</dbReference>
<dbReference type="InterPro" id="IPR029057">
    <property type="entry name" value="PRTase-like"/>
</dbReference>
<dbReference type="InterPro" id="IPR050054">
    <property type="entry name" value="UPRTase/APRTase"/>
</dbReference>
<dbReference type="NCBIfam" id="TIGR01090">
    <property type="entry name" value="apt"/>
    <property type="match status" value="1"/>
</dbReference>
<dbReference type="NCBIfam" id="NF002634">
    <property type="entry name" value="PRK02304.1-3"/>
    <property type="match status" value="1"/>
</dbReference>
<dbReference type="NCBIfam" id="NF002636">
    <property type="entry name" value="PRK02304.1-5"/>
    <property type="match status" value="1"/>
</dbReference>
<dbReference type="PANTHER" id="PTHR32315">
    <property type="entry name" value="ADENINE PHOSPHORIBOSYLTRANSFERASE"/>
    <property type="match status" value="1"/>
</dbReference>
<dbReference type="PANTHER" id="PTHR32315:SF3">
    <property type="entry name" value="ADENINE PHOSPHORIBOSYLTRANSFERASE"/>
    <property type="match status" value="1"/>
</dbReference>
<dbReference type="Pfam" id="PF00156">
    <property type="entry name" value="Pribosyltran"/>
    <property type="match status" value="1"/>
</dbReference>
<dbReference type="SUPFAM" id="SSF53271">
    <property type="entry name" value="PRTase-like"/>
    <property type="match status" value="1"/>
</dbReference>
<dbReference type="PROSITE" id="PS00103">
    <property type="entry name" value="PUR_PYR_PR_TRANSFER"/>
    <property type="match status" value="1"/>
</dbReference>
<feature type="chain" id="PRO_1000000282" description="Adenine phosphoribosyltransferase">
    <location>
        <begin position="1"/>
        <end position="175"/>
    </location>
</feature>
<gene>
    <name evidence="1" type="primary">apt</name>
    <name type="ordered locus">FTF0078</name>
</gene>
<accession>Q14JZ2</accession>
<evidence type="ECO:0000255" key="1">
    <source>
        <dbReference type="HAMAP-Rule" id="MF_00004"/>
    </source>
</evidence>
<proteinExistence type="inferred from homology"/>
<protein>
    <recommendedName>
        <fullName evidence="1">Adenine phosphoribosyltransferase</fullName>
        <shortName evidence="1">APRT</shortName>
        <ecNumber evidence="1">2.4.2.7</ecNumber>
    </recommendedName>
</protein>
<name>APT_FRAT1</name>
<comment type="function">
    <text evidence="1">Catalyzes a salvage reaction resulting in the formation of AMP, that is energically less costly than de novo synthesis.</text>
</comment>
<comment type="catalytic activity">
    <reaction evidence="1">
        <text>AMP + diphosphate = 5-phospho-alpha-D-ribose 1-diphosphate + adenine</text>
        <dbReference type="Rhea" id="RHEA:16609"/>
        <dbReference type="ChEBI" id="CHEBI:16708"/>
        <dbReference type="ChEBI" id="CHEBI:33019"/>
        <dbReference type="ChEBI" id="CHEBI:58017"/>
        <dbReference type="ChEBI" id="CHEBI:456215"/>
        <dbReference type="EC" id="2.4.2.7"/>
    </reaction>
</comment>
<comment type="pathway">
    <text evidence="1">Purine metabolism; AMP biosynthesis via salvage pathway; AMP from adenine: step 1/1.</text>
</comment>
<comment type="subunit">
    <text evidence="1">Homodimer.</text>
</comment>
<comment type="subcellular location">
    <subcellularLocation>
        <location evidence="1">Cytoplasm</location>
    </subcellularLocation>
</comment>
<comment type="similarity">
    <text evidence="1">Belongs to the purine/pyrimidine phosphoribosyltransferase family.</text>
</comment>
<reference key="1">
    <citation type="journal article" date="2007" name="PLoS ONE">
        <title>Genome sequencing shows that European isolates of Francisella tularensis subspecies tularensis are almost identical to US laboratory strain Schu S4.</title>
        <authorList>
            <person name="Chaudhuri R.R."/>
            <person name="Ren C.-P."/>
            <person name="Desmond L."/>
            <person name="Vincent G.A."/>
            <person name="Silman N.J."/>
            <person name="Brehm J.K."/>
            <person name="Elmore M.J."/>
            <person name="Hudson M.J."/>
            <person name="Forsman M."/>
            <person name="Isherwood K.E."/>
            <person name="Gurycova D."/>
            <person name="Minton N.P."/>
            <person name="Titball R.W."/>
            <person name="Pallen M.J."/>
            <person name="Vipond R."/>
        </authorList>
    </citation>
    <scope>NUCLEOTIDE SEQUENCE [LARGE SCALE GENOMIC DNA]</scope>
    <source>
        <strain>FSC 198</strain>
    </source>
</reference>
<keyword id="KW-0963">Cytoplasm</keyword>
<keyword id="KW-0328">Glycosyltransferase</keyword>
<keyword id="KW-0660">Purine salvage</keyword>
<keyword id="KW-0808">Transferase</keyword>